<comment type="function">
    <text evidence="2">Required for the assembly of the mitochondrial membrane respiratory chain NADH dehydrogenase (Complex I). Involved in mid-late stages of complex I assembly.</text>
</comment>
<comment type="cofactor">
    <cofactor evidence="1">
        <name>FAD</name>
        <dbReference type="ChEBI" id="CHEBI:57692"/>
    </cofactor>
</comment>
<comment type="subcellular location">
    <subcellularLocation>
        <location evidence="2">Mitochondrion inner membrane</location>
        <topology evidence="3">Single-pass membrane protein</topology>
    </subcellularLocation>
</comment>
<proteinExistence type="evidence at transcript level"/>
<accession>Q6DCP1</accession>
<protein>
    <recommendedName>
        <fullName>FAD-dependent oxidoreductase domain-containing protein 1</fullName>
        <ecNumber>1.-.-.-</ecNumber>
    </recommendedName>
</protein>
<gene>
    <name type="primary">foxred1</name>
</gene>
<sequence>MYVSSLKFPFLGIGVWKGVRLWRQRSLGTSACALKQDDFIKELDQNFVRLQKKLMDSLPSSDWSPFTPTGDLPPERADVVIVGGGVMGWSIAYWLKQKENRRGALKVVVVERDPTYSRASTVLSAGGIRQQFSRPENIQMSLFSAQFLRNINEHLGVVNEDRIDIQFNPSGYLFLASEEGATIMEENYNVQRECGAQVTLMLPDQLKKKFPWINTNGVALASYGLENEGWFDPWTLLNAFRRKALSMGVYQCHGEVTDFSTAKREMITADGDPVTFSRIGHVTVQMPNSLESQSVECSLVINAAGAWSSKVAELAGIGTGPSNSLEGIKLPVEPKKRYVYVVHCPNGPGLDCPLLIDNSGAYFRREGLGGNYIAGKSPAEEEEPDISNMEVDHDFFQEKVWPLLAHRVPAFESLKVKTSWAGYYDYNTYDQNGVVGMHPLVNNLFFATGFSGHGLQHSPAVGRAVAELIVDGGFKTLNLSSFSFRRFWSQEPLLERNIV</sequence>
<evidence type="ECO:0000250" key="1"/>
<evidence type="ECO:0000250" key="2">
    <source>
        <dbReference type="UniProtKB" id="Q96CU9"/>
    </source>
</evidence>
<evidence type="ECO:0000255" key="3"/>
<name>FXRD1_XENLA</name>
<keyword id="KW-0249">Electron transport</keyword>
<keyword id="KW-0274">FAD</keyword>
<keyword id="KW-0285">Flavoprotein</keyword>
<keyword id="KW-0472">Membrane</keyword>
<keyword id="KW-0496">Mitochondrion</keyword>
<keyword id="KW-0999">Mitochondrion inner membrane</keyword>
<keyword id="KW-0560">Oxidoreductase</keyword>
<keyword id="KW-1185">Reference proteome</keyword>
<keyword id="KW-0679">Respiratory chain</keyword>
<keyword id="KW-0812">Transmembrane</keyword>
<keyword id="KW-1133">Transmembrane helix</keyword>
<keyword id="KW-0813">Transport</keyword>
<feature type="chain" id="PRO_0000274145" description="FAD-dependent oxidoreductase domain-containing protein 1">
    <location>
        <begin position="1"/>
        <end position="499"/>
    </location>
</feature>
<feature type="transmembrane region" description="Helical" evidence="3">
    <location>
        <begin position="75"/>
        <end position="95"/>
    </location>
</feature>
<dbReference type="EC" id="1.-.-.-"/>
<dbReference type="EMBL" id="BC077963">
    <property type="protein sequence ID" value="AAH77963.1"/>
    <property type="molecule type" value="mRNA"/>
</dbReference>
<dbReference type="RefSeq" id="NP_001087061.1">
    <property type="nucleotide sequence ID" value="NM_001093592.1"/>
</dbReference>
<dbReference type="SMR" id="Q6DCP1"/>
<dbReference type="DNASU" id="446896"/>
<dbReference type="GeneID" id="446896"/>
<dbReference type="KEGG" id="xla:446896"/>
<dbReference type="AGR" id="Xenbase:XB-GENE-5896625"/>
<dbReference type="CTD" id="446896"/>
<dbReference type="Xenbase" id="XB-GENE-5896625">
    <property type="gene designation" value="foxred1.L"/>
</dbReference>
<dbReference type="OrthoDB" id="424974at2759"/>
<dbReference type="Proteomes" id="UP000186698">
    <property type="component" value="Chromosome 7L"/>
</dbReference>
<dbReference type="Bgee" id="446896">
    <property type="expression patterns" value="Expressed in kidney and 20 other cell types or tissues"/>
</dbReference>
<dbReference type="GO" id="GO:0005737">
    <property type="term" value="C:cytoplasm"/>
    <property type="evidence" value="ECO:0000318"/>
    <property type="project" value="GO_Central"/>
</dbReference>
<dbReference type="GO" id="GO:0005743">
    <property type="term" value="C:mitochondrial inner membrane"/>
    <property type="evidence" value="ECO:0000250"/>
    <property type="project" value="UniProtKB"/>
</dbReference>
<dbReference type="GO" id="GO:0016491">
    <property type="term" value="F:oxidoreductase activity"/>
    <property type="evidence" value="ECO:0007669"/>
    <property type="project" value="UniProtKB-KW"/>
</dbReference>
<dbReference type="GO" id="GO:0032981">
    <property type="term" value="P:mitochondrial respiratory chain complex I assembly"/>
    <property type="evidence" value="ECO:0000250"/>
    <property type="project" value="UniProtKB"/>
</dbReference>
<dbReference type="FunFam" id="3.30.9.10:FF:000155">
    <property type="entry name" value="FAD-dependent oxidoreductase domain-containing 1"/>
    <property type="match status" value="1"/>
</dbReference>
<dbReference type="Gene3D" id="3.30.9.10">
    <property type="entry name" value="D-Amino Acid Oxidase, subunit A, domain 2"/>
    <property type="match status" value="1"/>
</dbReference>
<dbReference type="Gene3D" id="3.50.50.60">
    <property type="entry name" value="FAD/NAD(P)-binding domain"/>
    <property type="match status" value="1"/>
</dbReference>
<dbReference type="InterPro" id="IPR006076">
    <property type="entry name" value="FAD-dep_OxRdtase"/>
</dbReference>
<dbReference type="InterPro" id="IPR036188">
    <property type="entry name" value="FAD/NAD-bd_sf"/>
</dbReference>
<dbReference type="PANTHER" id="PTHR13847:SF287">
    <property type="entry name" value="FAD-DEPENDENT OXIDOREDUCTASE DOMAIN-CONTAINING PROTEIN 1"/>
    <property type="match status" value="1"/>
</dbReference>
<dbReference type="PANTHER" id="PTHR13847">
    <property type="entry name" value="SARCOSINE DEHYDROGENASE-RELATED"/>
    <property type="match status" value="1"/>
</dbReference>
<dbReference type="Pfam" id="PF01266">
    <property type="entry name" value="DAO"/>
    <property type="match status" value="1"/>
</dbReference>
<dbReference type="SUPFAM" id="SSF51905">
    <property type="entry name" value="FAD/NAD(P)-binding domain"/>
    <property type="match status" value="1"/>
</dbReference>
<reference key="1">
    <citation type="submission" date="2004-07" db="EMBL/GenBank/DDBJ databases">
        <authorList>
            <consortium name="NIH - Xenopus Gene Collection (XGC) project"/>
        </authorList>
    </citation>
    <scope>NUCLEOTIDE SEQUENCE [LARGE SCALE MRNA]</scope>
    <source>
        <tissue>Embryo</tissue>
    </source>
</reference>
<organism>
    <name type="scientific">Xenopus laevis</name>
    <name type="common">African clawed frog</name>
    <dbReference type="NCBI Taxonomy" id="8355"/>
    <lineage>
        <taxon>Eukaryota</taxon>
        <taxon>Metazoa</taxon>
        <taxon>Chordata</taxon>
        <taxon>Craniata</taxon>
        <taxon>Vertebrata</taxon>
        <taxon>Euteleostomi</taxon>
        <taxon>Amphibia</taxon>
        <taxon>Batrachia</taxon>
        <taxon>Anura</taxon>
        <taxon>Pipoidea</taxon>
        <taxon>Pipidae</taxon>
        <taxon>Xenopodinae</taxon>
        <taxon>Xenopus</taxon>
        <taxon>Xenopus</taxon>
    </lineage>
</organism>